<feature type="signal peptide" evidence="1">
    <location>
        <begin position="1"/>
        <end position="19"/>
    </location>
</feature>
<feature type="propeptide" id="PRO_0000021496" evidence="6">
    <location>
        <begin position="20"/>
        <end position="21"/>
    </location>
</feature>
<feature type="peptide" id="PRO_0000021497" description="Immune-induced peptide 24" evidence="4 6">
    <location>
        <begin position="22"/>
        <end position="117"/>
    </location>
</feature>
<feature type="propeptide" id="PRO_0000021498" evidence="14 16">
    <location>
        <begin position="118"/>
        <end position="121"/>
    </location>
</feature>
<feature type="peptide" id="PRO_0000021499" description="Immune-induced peptide 12" evidence="3 4 6">
    <location>
        <begin position="122"/>
        <end position="144"/>
    </location>
</feature>
<feature type="peptide" id="PRO_0000455126" description="Immune-induced peptide 6" evidence="4">
    <location>
        <begin position="122"/>
        <end position="139"/>
    </location>
</feature>
<feature type="propeptide" id="PRO_0000021500" evidence="14 16">
    <location>
        <begin position="145"/>
        <end position="148"/>
    </location>
</feature>
<feature type="peptide" id="PRO_0000021501" description="Immune-induced peptide 10" evidence="3 4 6">
    <location>
        <begin position="149"/>
        <end position="171"/>
    </location>
</feature>
<feature type="propeptide" id="PRO_0000021502" evidence="14 16">
    <location>
        <begin position="172"/>
        <end position="175"/>
    </location>
</feature>
<feature type="peptide" id="PRO_0000021503" description="Immune-induced peptide 13" evidence="3 4 6 7">
    <location>
        <begin position="176"/>
        <end position="198"/>
    </location>
</feature>
<feature type="peptide" id="PRO_0000455127" description="Immune-induced peptide 8" evidence="4">
    <location>
        <begin position="176"/>
        <end position="196"/>
    </location>
</feature>
<feature type="peptide" id="PRO_0000455128" description="Immune-induced peptide 5" evidence="4">
    <location>
        <begin position="176"/>
        <end position="192"/>
    </location>
</feature>
<feature type="propeptide" id="PRO_0000455129" evidence="14">
    <location>
        <begin position="199"/>
        <end position="204"/>
    </location>
</feature>
<feature type="peptide" id="PRO_0000455130" description="Immune-induced peptide 22" evidence="4">
    <location>
        <begin position="205"/>
        <end position="257"/>
    </location>
</feature>
<feature type="region of interest" description="Disordered" evidence="2">
    <location>
        <begin position="95"/>
        <end position="122"/>
    </location>
</feature>
<feature type="modified residue" description="Pyrrolidone carboxylic acid" evidence="6">
    <location>
        <position position="22"/>
    </location>
</feature>
<feature type="modified residue" description="Pyrrolidone carboxylic acid" evidence="6">
    <location>
        <position position="122"/>
    </location>
</feature>
<feature type="modified residue" description="Pyrrolidone carboxylic acid" evidence="6">
    <location>
        <position position="149"/>
    </location>
</feature>
<feature type="modified residue" description="Pyrrolidone carboxylic acid" evidence="6 7">
    <location>
        <position position="176"/>
    </location>
</feature>
<feature type="glycosylation site" description="N-linked (GlcNAc...) asparagine" evidence="1">
    <location>
        <position position="97"/>
    </location>
</feature>
<feature type="glycosylation site" description="N-linked (GlcNAc...) asparagine" evidence="1">
    <location>
        <position position="225"/>
    </location>
</feature>
<gene>
    <name evidence="9 18" type="primary">BaraA1</name>
    <name evidence="18" type="synonym">IMPPP</name>
    <name evidence="18" type="ORF">CG33470</name>
</gene>
<sequence>MKSFGLIALAICGVICVAAEPQHTYDGRNGPHVFGSPGNQVYIRGQNEGTYSVPGVGGQFQNAPQRGEHVYTDEAGNTFVNRKNAGGPASHTISGPNFSAKNLGPNGAKSVGIPQRARRSPQFHVERPGRTVDVGNGGFYIQRGRRSPQLHVARPDRTVTIGNGGVYIQRSRRSPQFHVERPDRTVDFGNGGFSAQRFRRGINDARVQGENFVARDDQAGIWDNNVSVWKRPDGRTVTIDRNGHTIVSGRGRPAQHY</sequence>
<name>BARA1_DROME</name>
<protein>
    <recommendedName>
        <fullName evidence="9">Baramicin A1</fullName>
    </recommendedName>
    <component>
        <recommendedName>
            <fullName evidence="9">Immune-induced peptide 24</fullName>
            <shortName evidence="15">DIM-24</shortName>
            <shortName evidence="10">DIM24</shortName>
            <shortName evidence="9">IM24</shortName>
        </recommendedName>
    </component>
    <component>
        <recommendedName>
            <fullName evidence="9">Immune-induced peptide 10</fullName>
            <shortName evidence="15">DIM-10</shortName>
            <shortName evidence="10">DIM10</shortName>
            <shortName evidence="9">IM10</shortName>
        </recommendedName>
    </component>
    <component>
        <recommendedName>
            <fullName evidence="9">Immune-induced peptide 12</fullName>
            <shortName evidence="15">DIM-12</shortName>
            <shortName evidence="10">DIM12</shortName>
            <shortName evidence="9">IM12</shortName>
        </recommendedName>
    </component>
    <component>
        <recommendedName>
            <fullName evidence="9">Immune-induced peptide 13</fullName>
            <shortName evidence="15">DIM-13</shortName>
            <shortName evidence="10">DIM13</shortName>
            <shortName evidence="9">IM13</shortName>
        </recommendedName>
    </component>
    <component>
        <recommendedName>
            <fullName evidence="9">Immune-induced peptide 22</fullName>
            <shortName evidence="15">DIM-22</shortName>
            <shortName evidence="10">DIM22</shortName>
            <shortName evidence="9">IM22</shortName>
        </recommendedName>
    </component>
    <component>
        <recommendedName>
            <fullName evidence="9">Immune-induced peptide 5</fullName>
            <shortName evidence="14">DIM-5</shortName>
            <shortName evidence="14">DIM5</shortName>
            <shortName evidence="9">IM5</shortName>
        </recommendedName>
    </component>
    <component>
        <recommendedName>
            <fullName evidence="9">Immune-induced peptide 6</fullName>
            <shortName evidence="14">DIM-6</shortName>
            <shortName evidence="14">DIM6</shortName>
            <shortName evidence="9">IM6</shortName>
        </recommendedName>
    </component>
    <component>
        <recommendedName>
            <fullName evidence="9">Immune-induced peptide 8</fullName>
            <shortName evidence="15">DIM-8</shortName>
            <shortName evidence="10">DIM8</shortName>
            <shortName evidence="9">IM8</shortName>
        </recommendedName>
    </component>
</protein>
<evidence type="ECO:0000255" key="1"/>
<evidence type="ECO:0000256" key="2">
    <source>
        <dbReference type="SAM" id="MobiDB-lite"/>
    </source>
</evidence>
<evidence type="ECO:0000269" key="3">
    <source>
    </source>
</evidence>
<evidence type="ECO:0000269" key="4">
    <source>
    </source>
</evidence>
<evidence type="ECO:0000269" key="5">
    <source>
    </source>
</evidence>
<evidence type="ECO:0000269" key="6">
    <source ref="4"/>
</evidence>
<evidence type="ECO:0000269" key="7">
    <source ref="7"/>
</evidence>
<evidence type="ECO:0000303" key="8">
    <source>
    </source>
</evidence>
<evidence type="ECO:0000303" key="9">
    <source>
    </source>
</evidence>
<evidence type="ECO:0000303" key="10">
    <source>
    </source>
</evidence>
<evidence type="ECO:0000303" key="11">
    <source ref="4"/>
</evidence>
<evidence type="ECO:0000303" key="12">
    <source ref="7"/>
</evidence>
<evidence type="ECO:0000305" key="13"/>
<evidence type="ECO:0000305" key="14">
    <source>
    </source>
</evidence>
<evidence type="ECO:0000305" key="15">
    <source>
    </source>
</evidence>
<evidence type="ECO:0000305" key="16">
    <source ref="4"/>
</evidence>
<evidence type="ECO:0000312" key="17">
    <source>
        <dbReference type="EMBL" id="AAO41418.1"/>
    </source>
</evidence>
<evidence type="ECO:0000312" key="18">
    <source>
        <dbReference type="FlyBase" id="FBgn0053470"/>
    </source>
</evidence>
<evidence type="ECO:0000312" key="19">
    <source>
        <dbReference type="Proteomes" id="UP000000803"/>
    </source>
</evidence>
<proteinExistence type="evidence at protein level"/>
<keyword id="KW-0929">Antimicrobial</keyword>
<keyword id="KW-0165">Cleavage on pair of basic residues</keyword>
<keyword id="KW-0903">Direct protein sequencing</keyword>
<keyword id="KW-0295">Fungicide</keyword>
<keyword id="KW-0325">Glycoprotein</keyword>
<keyword id="KW-0391">Immunity</keyword>
<keyword id="KW-0399">Innate immunity</keyword>
<keyword id="KW-0873">Pyrrolidone carboxylic acid</keyword>
<keyword id="KW-1185">Reference proteome</keyword>
<keyword id="KW-0964">Secreted</keyword>
<keyword id="KW-0732">Signal</keyword>
<organism evidence="19">
    <name type="scientific">Drosophila melanogaster</name>
    <name type="common">Fruit fly</name>
    <dbReference type="NCBI Taxonomy" id="7227"/>
    <lineage>
        <taxon>Eukaryota</taxon>
        <taxon>Metazoa</taxon>
        <taxon>Ecdysozoa</taxon>
        <taxon>Arthropoda</taxon>
        <taxon>Hexapoda</taxon>
        <taxon>Insecta</taxon>
        <taxon>Pterygota</taxon>
        <taxon>Neoptera</taxon>
        <taxon>Endopterygota</taxon>
        <taxon>Diptera</taxon>
        <taxon>Brachycera</taxon>
        <taxon>Muscomorpha</taxon>
        <taxon>Ephydroidea</taxon>
        <taxon>Drosophilidae</taxon>
        <taxon>Drosophila</taxon>
        <taxon>Sophophora</taxon>
    </lineage>
</organism>
<comment type="function">
    <text evidence="4 5">Secreted immune-induced peptides induced by Toll signaling (PubMed:34432851, PubMed:9736738). Has a significant role in resistance to infection by the entomopathogenic fungus B.bassiana R444 and weak antifungal activity against M.rileyi PHP1705 (PubMed:34432851). In adult males, activity appears to be important for neuromuscular processes that mediate correct wing posture upon Toll activation (PubMed:34432851).</text>
</comment>
<comment type="subcellular location">
    <molecule>Immune-induced peptide 24</molecule>
    <subcellularLocation>
        <location evidence="4">Secreted</location>
    </subcellularLocation>
</comment>
<comment type="subcellular location">
    <molecule>Immune-induced peptide 6</molecule>
    <subcellularLocation>
        <location evidence="4">Secreted</location>
    </subcellularLocation>
</comment>
<comment type="subcellular location">
    <molecule>Immune-induced peptide 12</molecule>
    <subcellularLocation>
        <location evidence="3 4">Secreted</location>
    </subcellularLocation>
</comment>
<comment type="subcellular location">
    <molecule>Immune-induced peptide 10</molecule>
    <subcellularLocation>
        <location evidence="3 4 5">Secreted</location>
    </subcellularLocation>
</comment>
<comment type="subcellular location">
    <molecule>Immune-induced peptide 5</molecule>
    <subcellularLocation>
        <location evidence="4">Secreted</location>
    </subcellularLocation>
</comment>
<comment type="subcellular location">
    <molecule>Immune-induced peptide 8</molecule>
    <subcellularLocation>
        <location evidence="4">Secreted</location>
    </subcellularLocation>
</comment>
<comment type="subcellular location">
    <molecule>Immune-induced peptide 13</molecule>
    <subcellularLocation>
        <location evidence="3 4 7">Secreted</location>
    </subcellularLocation>
</comment>
<comment type="subcellular location">
    <molecule>Immune-induced peptide 22</molecule>
    <subcellularLocation>
        <location evidence="4">Secreted</location>
    </subcellularLocation>
</comment>
<comment type="tissue specificity">
    <molecule>Immune-induced peptide 24</molecule>
    <text evidence="4">Hemolymph (at protein level).</text>
</comment>
<comment type="tissue specificity">
    <molecule>Immune-induced peptide 6</molecule>
    <text evidence="4">Hemolymph (at protein level).</text>
</comment>
<comment type="tissue specificity">
    <molecule>Immune-induced peptide 12</molecule>
    <text evidence="3 4">Hemolymph (at protein level).</text>
</comment>
<comment type="tissue specificity">
    <molecule>Immune-induced peptide 10</molecule>
    <text evidence="3 4 5">Hemolymph (at protein level).</text>
</comment>
<comment type="tissue specificity">
    <molecule>Immune-induced peptide 5</molecule>
    <text evidence="4">Hemolymph (at protein level).</text>
</comment>
<comment type="tissue specificity">
    <molecule>Immune-induced peptide 8</molecule>
    <text evidence="4">Hemolymph (at protein level).</text>
</comment>
<comment type="tissue specificity">
    <molecule>Immune-induced peptide 13</molecule>
    <text evidence="3 4 7">Hemolymph (at protein level).</text>
</comment>
<comment type="tissue specificity">
    <molecule>Immune-induced peptide 22</molecule>
    <text evidence="4">Hemolymph (at protein level).</text>
</comment>
<comment type="induction">
    <text evidence="3 4 5">By bacterial infection (at protein level) (PubMed:16510152, PubMed:9736738). Detected within 24 hours of infection (PubMed:9736738). Up-regulated in the fat body following infection with M.luteus, with expression levels increasing from 2 to 48 hours post infection (PubMed:34432851). In adults, also up-regulated in the head including the border of the eyes and the ocelli, and in the brain tissue including the region posterior to the central brain furrow (PubMed:34432851). Up-regulated in the wing veins, along the borders of the thoracic pleura, and in the spermatheca of females (PubMed:34432851). In larvae, induced in the brain tissue at the posterior of the ventral nervous system (PubMed:34432851).</text>
</comment>
<comment type="PTM">
    <text evidence="4 5">Proteolytically cleaved.</text>
</comment>
<comment type="mass spectrometry">
    <molecule>Immune-induced peptide 24</molecule>
</comment>
<comment type="mass spectrometry">
    <molecule>Immune-induced peptide 12</molecule>
</comment>
<comment type="mass spectrometry">
    <molecule>Immune-induced peptide 12</molecule>
</comment>
<comment type="mass spectrometry">
    <molecule>Immune-induced peptide 10</molecule>
</comment>
<comment type="mass spectrometry">
    <molecule>Immune-induced peptide 10</molecule>
</comment>
<comment type="mass spectrometry">
    <molecule>Immune-induced peptide 13</molecule>
</comment>
<comment type="mass spectrometry">
    <molecule>Immune-induced peptide 13</molecule>
</comment>
<comment type="mass spectrometry">
    <molecule>Immune-induced peptide 13</molecule>
</comment>
<comment type="mass spectrometry">
    <molecule>Immune-induced peptide 22</molecule>
</comment>
<comment type="disruption phenotype">
    <text evidence="4">Viable with no obvious morphological defects, however flies have an increased susceptibility to entomopathogenic fungi (PubMed:34432851). Displays increased fungal load 48 hours after infection with B.bassiana R444 spores resulting in a significant decrease in survival (PubMed:34432851). Survival is also slightly decreased following septic injury with M.rileyi PHP1705 (PubMed:34432851). Some adult males display an erect wing phenotype upon infection with Gram-positive bacteria, fungi, and to a lesser extent, Gram-negative bacteria and clean injury (PubMed:34432851). Males also display the erect wing phenotype after injury with heat-killed E.faecalis suggesting that the phenotype occurs due to Toll activation and is not the result of infection (PubMed:34432851). No effect on activation of the Toll or imd/NF-kappa-B signaling cascades in response to microbial infection (PubMed:34432851). No significant affect on lifespan, resistance to bacterial infection and survival following clean injury (PubMed:34432851).</text>
</comment>
<comment type="miscellaneous">
    <text evidence="4">In some wild flies and common laboratory strains, the BaraA locus has undergone a duplication event to produce two identical paralogs, BaraA1 and BaraA2 (PubMed:34432851). However BaraA copy number varies within these strains indicating that the duplication event is recent and not fixed (PubMed:34432851).</text>
</comment>
<comment type="miscellaneous">
    <text evidence="4">The name 'Baramicin' derives from the Japanese idiom Bara-Bara, meaning to break apart, and refers to the multiple peptides produced from the precursor protein.</text>
</comment>
<accession>C0HLZ9</accession>
<accession>Q7KR65</accession>
<accession>Q7KR66</accession>
<accession>Q8ML70</accession>
<accession>Q8ML71</accession>
<dbReference type="EMBL" id="AE013599">
    <property type="protein sequence ID" value="AAS64857.2"/>
    <property type="molecule type" value="Genomic_DNA"/>
</dbReference>
<dbReference type="EMBL" id="AE013599">
    <property type="protein sequence ID" value="AAS64856.1"/>
    <property type="molecule type" value="Genomic_DNA"/>
</dbReference>
<dbReference type="EMBL" id="BK003775">
    <property type="protein sequence ID" value="DAA02473.1"/>
    <property type="molecule type" value="Genomic_DNA"/>
</dbReference>
<dbReference type="EMBL" id="BT003754">
    <property type="protein sequence ID" value="AAO41418.1"/>
    <property type="molecule type" value="mRNA"/>
</dbReference>
<dbReference type="RefSeq" id="NP_995829.2">
    <property type="nucleotide sequence ID" value="NM_206107.2"/>
</dbReference>
<dbReference type="RefSeq" id="NP_995830.1">
    <property type="nucleotide sequence ID" value="NM_206108.2"/>
</dbReference>
<dbReference type="GlyCosmos" id="C0HLZ9">
    <property type="glycosylation" value="2 sites, No reported glycans"/>
</dbReference>
<dbReference type="GlyGen" id="C0HLZ9">
    <property type="glycosylation" value="2 sites"/>
</dbReference>
<dbReference type="EnsemblMetazoa" id="FBtr0087654">
    <property type="protein sequence ID" value="FBpp0086780"/>
    <property type="gene ID" value="FBgn0288447"/>
</dbReference>
<dbReference type="EnsemblMetazoa" id="FBtr0087656">
    <property type="protein sequence ID" value="FBpp0086782"/>
    <property type="gene ID" value="FBgn0053470"/>
</dbReference>
<dbReference type="EnsemblMetazoa" id="FBtr0303099">
    <property type="protein sequence ID" value="FBpp0292218"/>
    <property type="gene ID" value="FBgn0053470"/>
</dbReference>
<dbReference type="EnsemblMetazoa" id="FBtr0339757">
    <property type="protein sequence ID" value="FBpp0308804"/>
    <property type="gene ID" value="FBgn0288447"/>
</dbReference>
<dbReference type="GeneID" id="2768831"/>
<dbReference type="GeneID" id="36486"/>
<dbReference type="KEGG" id="dme:Dmel_CG18279"/>
<dbReference type="KEGG" id="dme:Dmel_CG33470"/>
<dbReference type="AGR" id="FB:FBgn0053470"/>
<dbReference type="CTD" id="2768831"/>
<dbReference type="CTD" id="36486"/>
<dbReference type="FlyBase" id="FBgn0053470">
    <property type="gene designation" value="BaraA1"/>
</dbReference>
<dbReference type="VEuPathDB" id="VectorBase:FBgn0053470"/>
<dbReference type="VEuPathDB" id="VectorBase:FBgn0288447"/>
<dbReference type="OMA" id="QKTYDGR"/>
<dbReference type="OrthoDB" id="7883374at2759"/>
<dbReference type="PRO" id="PR:C0HLZ9"/>
<dbReference type="Proteomes" id="UP000000803">
    <property type="component" value="Chromosome 2R"/>
</dbReference>
<dbReference type="GO" id="GO:0005615">
    <property type="term" value="C:extracellular space"/>
    <property type="evidence" value="ECO:0000314"/>
    <property type="project" value="FlyBase"/>
</dbReference>
<dbReference type="GO" id="GO:0061760">
    <property type="term" value="P:antifungal innate immune response"/>
    <property type="evidence" value="ECO:0000314"/>
    <property type="project" value="FlyBase"/>
</dbReference>
<dbReference type="GO" id="GO:0031640">
    <property type="term" value="P:killing of cells of another organism"/>
    <property type="evidence" value="ECO:0007669"/>
    <property type="project" value="UniProtKB-KW"/>
</dbReference>
<dbReference type="GO" id="GO:0140459">
    <property type="term" value="P:response to Gram-positive bacterium"/>
    <property type="evidence" value="ECO:0000270"/>
    <property type="project" value="FlyBase"/>
</dbReference>
<dbReference type="GO" id="GO:0009636">
    <property type="term" value="P:response to toxic substance"/>
    <property type="evidence" value="ECO:0000315"/>
    <property type="project" value="FlyBase"/>
</dbReference>
<reference evidence="19" key="1">
    <citation type="journal article" date="2000" name="Science">
        <title>The genome sequence of Drosophila melanogaster.</title>
        <authorList>
            <person name="Adams M.D."/>
            <person name="Celniker S.E."/>
            <person name="Holt R.A."/>
            <person name="Evans C.A."/>
            <person name="Gocayne J.D."/>
            <person name="Amanatides P.G."/>
            <person name="Scherer S.E."/>
            <person name="Li P.W."/>
            <person name="Hoskins R.A."/>
            <person name="Galle R.F."/>
            <person name="George R.A."/>
            <person name="Lewis S.E."/>
            <person name="Richards S."/>
            <person name="Ashburner M."/>
            <person name="Henderson S.N."/>
            <person name="Sutton G.G."/>
            <person name="Wortman J.R."/>
            <person name="Yandell M.D."/>
            <person name="Zhang Q."/>
            <person name="Chen L.X."/>
            <person name="Brandon R.C."/>
            <person name="Rogers Y.-H.C."/>
            <person name="Blazej R.G."/>
            <person name="Champe M."/>
            <person name="Pfeiffer B.D."/>
            <person name="Wan K.H."/>
            <person name="Doyle C."/>
            <person name="Baxter E.G."/>
            <person name="Helt G."/>
            <person name="Nelson C.R."/>
            <person name="Miklos G.L.G."/>
            <person name="Abril J.F."/>
            <person name="Agbayani A."/>
            <person name="An H.-J."/>
            <person name="Andrews-Pfannkoch C."/>
            <person name="Baldwin D."/>
            <person name="Ballew R.M."/>
            <person name="Basu A."/>
            <person name="Baxendale J."/>
            <person name="Bayraktaroglu L."/>
            <person name="Beasley E.M."/>
            <person name="Beeson K.Y."/>
            <person name="Benos P.V."/>
            <person name="Berman B.P."/>
            <person name="Bhandari D."/>
            <person name="Bolshakov S."/>
            <person name="Borkova D."/>
            <person name="Botchan M.R."/>
            <person name="Bouck J."/>
            <person name="Brokstein P."/>
            <person name="Brottier P."/>
            <person name="Burtis K.C."/>
            <person name="Busam D.A."/>
            <person name="Butler H."/>
            <person name="Cadieu E."/>
            <person name="Center A."/>
            <person name="Chandra I."/>
            <person name="Cherry J.M."/>
            <person name="Cawley S."/>
            <person name="Dahlke C."/>
            <person name="Davenport L.B."/>
            <person name="Davies P."/>
            <person name="de Pablos B."/>
            <person name="Delcher A."/>
            <person name="Deng Z."/>
            <person name="Mays A.D."/>
            <person name="Dew I."/>
            <person name="Dietz S.M."/>
            <person name="Dodson K."/>
            <person name="Doup L.E."/>
            <person name="Downes M."/>
            <person name="Dugan-Rocha S."/>
            <person name="Dunkov B.C."/>
            <person name="Dunn P."/>
            <person name="Durbin K.J."/>
            <person name="Evangelista C.C."/>
            <person name="Ferraz C."/>
            <person name="Ferriera S."/>
            <person name="Fleischmann W."/>
            <person name="Fosler C."/>
            <person name="Gabrielian A.E."/>
            <person name="Garg N.S."/>
            <person name="Gelbart W.M."/>
            <person name="Glasser K."/>
            <person name="Glodek A."/>
            <person name="Gong F."/>
            <person name="Gorrell J.H."/>
            <person name="Gu Z."/>
            <person name="Guan P."/>
            <person name="Harris M."/>
            <person name="Harris N.L."/>
            <person name="Harvey D.A."/>
            <person name="Heiman T.J."/>
            <person name="Hernandez J.R."/>
            <person name="Houck J."/>
            <person name="Hostin D."/>
            <person name="Houston K.A."/>
            <person name="Howland T.J."/>
            <person name="Wei M.-H."/>
            <person name="Ibegwam C."/>
            <person name="Jalali M."/>
            <person name="Kalush F."/>
            <person name="Karpen G.H."/>
            <person name="Ke Z."/>
            <person name="Kennison J.A."/>
            <person name="Ketchum K.A."/>
            <person name="Kimmel B.E."/>
            <person name="Kodira C.D."/>
            <person name="Kraft C.L."/>
            <person name="Kravitz S."/>
            <person name="Kulp D."/>
            <person name="Lai Z."/>
            <person name="Lasko P."/>
            <person name="Lei Y."/>
            <person name="Levitsky A.A."/>
            <person name="Li J.H."/>
            <person name="Li Z."/>
            <person name="Liang Y."/>
            <person name="Lin X."/>
            <person name="Liu X."/>
            <person name="Mattei B."/>
            <person name="McIntosh T.C."/>
            <person name="McLeod M.P."/>
            <person name="McPherson D."/>
            <person name="Merkulov G."/>
            <person name="Milshina N.V."/>
            <person name="Mobarry C."/>
            <person name="Morris J."/>
            <person name="Moshrefi A."/>
            <person name="Mount S.M."/>
            <person name="Moy M."/>
            <person name="Murphy B."/>
            <person name="Murphy L."/>
            <person name="Muzny D.M."/>
            <person name="Nelson D.L."/>
            <person name="Nelson D.R."/>
            <person name="Nelson K.A."/>
            <person name="Nixon K."/>
            <person name="Nusskern D.R."/>
            <person name="Pacleb J.M."/>
            <person name="Palazzolo M."/>
            <person name="Pittman G.S."/>
            <person name="Pan S."/>
            <person name="Pollard J."/>
            <person name="Puri V."/>
            <person name="Reese M.G."/>
            <person name="Reinert K."/>
            <person name="Remington K."/>
            <person name="Saunders R.D.C."/>
            <person name="Scheeler F."/>
            <person name="Shen H."/>
            <person name="Shue B.C."/>
            <person name="Siden-Kiamos I."/>
            <person name="Simpson M."/>
            <person name="Skupski M.P."/>
            <person name="Smith T.J."/>
            <person name="Spier E."/>
            <person name="Spradling A.C."/>
            <person name="Stapleton M."/>
            <person name="Strong R."/>
            <person name="Sun E."/>
            <person name="Svirskas R."/>
            <person name="Tector C."/>
            <person name="Turner R."/>
            <person name="Venter E."/>
            <person name="Wang A.H."/>
            <person name="Wang X."/>
            <person name="Wang Z.-Y."/>
            <person name="Wassarman D.A."/>
            <person name="Weinstock G.M."/>
            <person name="Weissenbach J."/>
            <person name="Williams S.M."/>
            <person name="Woodage T."/>
            <person name="Worley K.C."/>
            <person name="Wu D."/>
            <person name="Yang S."/>
            <person name="Yao Q.A."/>
            <person name="Ye J."/>
            <person name="Yeh R.-F."/>
            <person name="Zaveri J.S."/>
            <person name="Zhan M."/>
            <person name="Zhang G."/>
            <person name="Zhao Q."/>
            <person name="Zheng L."/>
            <person name="Zheng X.H."/>
            <person name="Zhong F.N."/>
            <person name="Zhong W."/>
            <person name="Zhou X."/>
            <person name="Zhu S.C."/>
            <person name="Zhu X."/>
            <person name="Smith H.O."/>
            <person name="Gibbs R.A."/>
            <person name="Myers E.W."/>
            <person name="Rubin G.M."/>
            <person name="Venter J.C."/>
        </authorList>
    </citation>
    <scope>NUCLEOTIDE SEQUENCE [LARGE SCALE GENOMIC DNA]</scope>
    <source>
        <strain evidence="19">Berkeley</strain>
    </source>
</reference>
<reference evidence="19" key="2">
    <citation type="journal article" date="2002" name="Genome Biol.">
        <title>Annotation of the Drosophila melanogaster euchromatic genome: a systematic review.</title>
        <authorList>
            <person name="Misra S."/>
            <person name="Crosby M.A."/>
            <person name="Mungall C.J."/>
            <person name="Matthews B.B."/>
            <person name="Campbell K.S."/>
            <person name="Hradecky P."/>
            <person name="Huang Y."/>
            <person name="Kaminker J.S."/>
            <person name="Millburn G.H."/>
            <person name="Prochnik S.E."/>
            <person name="Smith C.D."/>
            <person name="Tupy J.L."/>
            <person name="Whitfield E.J."/>
            <person name="Bayraktaroglu L."/>
            <person name="Berman B.P."/>
            <person name="Bettencourt B.R."/>
            <person name="Celniker S.E."/>
            <person name="de Grey A.D.N.J."/>
            <person name="Drysdale R.A."/>
            <person name="Harris N.L."/>
            <person name="Richter J."/>
            <person name="Russo S."/>
            <person name="Schroeder A.J."/>
            <person name="Shu S.Q."/>
            <person name="Stapleton M."/>
            <person name="Yamada C."/>
            <person name="Ashburner M."/>
            <person name="Gelbart W.M."/>
            <person name="Rubin G.M."/>
            <person name="Lewis S.E."/>
        </authorList>
    </citation>
    <scope>GENOME REANNOTATION</scope>
    <source>
        <strain evidence="19">Berkeley</strain>
    </source>
</reference>
<reference evidence="17" key="3">
    <citation type="submission" date="2003-02" db="EMBL/GenBank/DDBJ databases">
        <authorList>
            <person name="Stapleton M."/>
            <person name="Brokstein P."/>
            <person name="Hong L."/>
            <person name="Agbayani A."/>
            <person name="Carlson J."/>
            <person name="Champe M."/>
            <person name="Chavez C."/>
            <person name="Dorsett V."/>
            <person name="Dresnek D."/>
            <person name="Farfan D."/>
            <person name="Frise E."/>
            <person name="George R."/>
            <person name="Gonzalez M."/>
            <person name="Guarin H."/>
            <person name="Kronmiller B."/>
            <person name="Li P."/>
            <person name="Liao G."/>
            <person name="Miranda A."/>
            <person name="Mungall C.J."/>
            <person name="Nunoo J."/>
            <person name="Pacleb J."/>
            <person name="Paragas V."/>
            <person name="Park S."/>
            <person name="Patel S."/>
            <person name="Phouanenavong S."/>
            <person name="Wan K."/>
            <person name="Yu C."/>
            <person name="Lewis S.E."/>
            <person name="Rubin G.M."/>
            <person name="Celniker S."/>
        </authorList>
    </citation>
    <scope>NUCLEOTIDE SEQUENCE [LARGE SCALE MRNA]</scope>
    <source>
        <strain evidence="17">Berkeley</strain>
        <tissue evidence="17">Head</tissue>
    </source>
</reference>
<reference evidence="13" key="4">
    <citation type="submission" date="2000-07" db="UniProtKB">
        <authorList>
            <person name="Bulet P."/>
        </authorList>
    </citation>
    <scope>PROTEIN SEQUENCE OF 22-117; 122-144; 149-171 AND 176-198</scope>
    <scope>PYROGLUTAMATE FORMATION AT GLN-22; GLN-122; GLN-149 AND GLN-176</scope>
    <scope>MASS SPECTROMETRY</scope>
    <source>
        <strain evidence="11">Oregon-R</strain>
        <tissue evidence="11">Hemolymph</tissue>
    </source>
</reference>
<reference key="5">
    <citation type="journal article" date="2003" name="Genome Biol.">
        <title>An integrated gene annotation and transcriptional profiling approach towards the full gene content of the Drosophila genome.</title>
        <authorList>
            <person name="Hild M."/>
            <person name="Beckmann B."/>
            <person name="Haas S.A."/>
            <person name="Koch B."/>
            <person name="Solovyev V."/>
            <person name="Busold C."/>
            <person name="Fellenberg K."/>
            <person name="Boutros M."/>
            <person name="Vingron M."/>
            <person name="Sauer F."/>
            <person name="Hoheisel J.D."/>
            <person name="Paro R."/>
        </authorList>
    </citation>
    <scope>GENOME REANNOTATION</scope>
</reference>
<reference evidence="13" key="6">
    <citation type="journal article" date="1998" name="Proc. Natl. Acad. Sci. U.S.A.">
        <title>Differential display of peptides induced during the immune response of Drosophila: a matrix-assisted laser desorption ionization time-of-flight mass spectrometry study.</title>
        <authorList>
            <person name="Uttenweiler-Joseph S."/>
            <person name="Moniatte M."/>
            <person name="Lagueux M."/>
            <person name="van Dorsselaer A."/>
            <person name="Hoffmann J.A."/>
            <person name="Bulet P."/>
        </authorList>
    </citation>
    <scope>FUNCTION</scope>
    <scope>INDUCTION BY BACTERIA</scope>
    <scope>SUBCELLULAR LOCATION</scope>
    <scope>TISSUE SPECIFICITY</scope>
    <source>
        <strain evidence="10">Oregon-R</strain>
        <tissue evidence="10">Hemolymph</tissue>
    </source>
</reference>
<reference key="7">
    <citation type="journal article" date="2001" name="Eur. J. Mass Spectrom.">
        <title>De novo sequencing by nano-electrospray multiple-stage tandem mass spectrometry of an immune-induced peptide of Drosophila melanogaster.</title>
        <authorList>
            <person name="Carte N."/>
            <person name="Cavusoglu N."/>
            <person name="Leize E."/>
            <person name="Dorsselaer A.V."/>
        </authorList>
    </citation>
    <scope>PROTEIN SEQUENCE OF 176-198</scope>
    <scope>SUBCELLULAR LOCATION</scope>
    <scope>TISSUE SPECIFICITY</scope>
    <scope>IDENTIFICATION BY MASS SPECTROMETRY</scope>
    <scope>PYROGLUTAMATE FORMATION AT GLN-176</scope>
    <source>
        <tissue evidence="12">Hemolymph</tissue>
    </source>
</reference>
<reference key="8">
    <citation type="journal article" date="2006" name="J. Insect Physiol.">
        <title>Identification of new immune induced molecules in the haemolymph of Drosophila melanogaster by 2D-nanoLC MS/MS.</title>
        <authorList>
            <person name="Verleyen P."/>
            <person name="Baggerman G."/>
            <person name="D'Hertog W."/>
            <person name="Vierstraete E."/>
            <person name="Husson S.J."/>
            <person name="Schoofs L."/>
        </authorList>
    </citation>
    <scope>SUBCELLULAR LOCATION</scope>
    <scope>TISSUE SPECIFICITY</scope>
    <scope>INDUCTION BY BACTERIA</scope>
    <scope>IDENTIFICATION BY MASS SPECTROMETRY</scope>
    <source>
        <tissue evidence="8">Hemolymph</tissue>
    </source>
</reference>
<reference key="9">
    <citation type="journal article" date="2021" name="PLoS Pathog.">
        <title>The Drosophila Baramicin polypeptide gene protects against fungal infection.</title>
        <authorList>
            <person name="Hanson M.A."/>
            <person name="Cohen L.B."/>
            <person name="Marra A."/>
            <person name="Iatsenko I."/>
            <person name="Wasserman S.A."/>
            <person name="Lemaitre B."/>
        </authorList>
    </citation>
    <scope>SYNTHESIS OF 122-144; 149-171 AND 176-198</scope>
    <scope>FUNCTION</scope>
    <scope>SUBCELLULAR LOCATION</scope>
    <scope>TISSUE SPECIFICITY</scope>
    <scope>INDUCTION BY BACTERIA</scope>
    <scope>DISRUPTION PHENOTYPE</scope>
    <scope>IDENTIFICATION BY MASS SPECTROMETRY</scope>
    <scope>PROTEOLYTIC PROCESSING</scope>
    <source>
        <strain evidence="9">Oregon-R</strain>
        <tissue evidence="9">Hemolymph</tissue>
    </source>
</reference>